<sequence>MNLRVKQKIPLKIKRMGINGEGIGFYKRTLVFVPGALKGEEIFCQITSVKHNFVQARLLTINKKSKFRVRPACPIYEECGGCQIMHLRYDKQLDFKKDLLKQALKKFKPQGYETYDIRATIGMEHPQHYRAKLQFQTRKFGGSVRAGLFKEQSHHLVDIKDCLIQDELTQKIVNRVCQLLDDYNIPVYDERRHFAGVRTIMVRKSQATNQVQLIFVTSKEVNLVGIIRDLTGYFPEIKTVAVNFNSSKSSAIYGQKTEILWGIDSISEEVLDYSFSLSPRAFYQLNPQQTQVLYHQALQALDVTAEDHLIDAYCGVGSIGLAFANKVKSVRGMDIIPEAITDAKRNAERMGYTNTYYEMGKAENVIPKWYKDGYQASALIVDPPRTGLDEKLLKTLLTYQPEKMVYVSCNVSTLARDLVQLVKVYEVNYIQSVDMFPHTARTEAVVKLVKRKQNSCSKK</sequence>
<protein>
    <recommendedName>
        <fullName>Uncharacterized RNA methyltransferase SMU_1779c</fullName>
        <ecNumber>2.1.1.-</ecNumber>
    </recommendedName>
</protein>
<dbReference type="EC" id="2.1.1.-"/>
<dbReference type="EMBL" id="AE014133">
    <property type="protein sequence ID" value="AAN59406.1"/>
    <property type="molecule type" value="Genomic_DNA"/>
</dbReference>
<dbReference type="RefSeq" id="NP_722100.1">
    <property type="nucleotide sequence ID" value="NC_004350.2"/>
</dbReference>
<dbReference type="SMR" id="Q8DSK3"/>
<dbReference type="STRING" id="210007.SMU_1779c"/>
<dbReference type="KEGG" id="smu:SMU_1779c"/>
<dbReference type="PATRIC" id="fig|210007.7.peg.1587"/>
<dbReference type="eggNOG" id="COG2265">
    <property type="taxonomic scope" value="Bacteria"/>
</dbReference>
<dbReference type="HOGENOM" id="CLU_014689_7_1_9"/>
<dbReference type="OrthoDB" id="9804590at2"/>
<dbReference type="PhylomeDB" id="Q8DSK3"/>
<dbReference type="Proteomes" id="UP000002512">
    <property type="component" value="Chromosome"/>
</dbReference>
<dbReference type="GO" id="GO:0051539">
    <property type="term" value="F:4 iron, 4 sulfur cluster binding"/>
    <property type="evidence" value="ECO:0007669"/>
    <property type="project" value="UniProtKB-KW"/>
</dbReference>
<dbReference type="GO" id="GO:0046872">
    <property type="term" value="F:metal ion binding"/>
    <property type="evidence" value="ECO:0007669"/>
    <property type="project" value="UniProtKB-KW"/>
</dbReference>
<dbReference type="GO" id="GO:0070041">
    <property type="term" value="F:rRNA (uridine-C5-)-methyltransferase activity"/>
    <property type="evidence" value="ECO:0007669"/>
    <property type="project" value="TreeGrafter"/>
</dbReference>
<dbReference type="GO" id="GO:0070475">
    <property type="term" value="P:rRNA base methylation"/>
    <property type="evidence" value="ECO:0007669"/>
    <property type="project" value="TreeGrafter"/>
</dbReference>
<dbReference type="FunFam" id="3.40.50.150:FF:000009">
    <property type="entry name" value="23S rRNA (Uracil(1939)-C(5))-methyltransferase RlmD"/>
    <property type="match status" value="1"/>
</dbReference>
<dbReference type="FunFam" id="2.40.50.140:FF:000097">
    <property type="entry name" value="23S rRNA (uracil(1939)-C(5))-methyltransferase RlmD"/>
    <property type="match status" value="1"/>
</dbReference>
<dbReference type="FunFam" id="2.40.50.1070:FF:000003">
    <property type="entry name" value="23S rRNA (Uracil-5-)-methyltransferase RumA"/>
    <property type="match status" value="1"/>
</dbReference>
<dbReference type="Gene3D" id="2.40.50.1070">
    <property type="match status" value="1"/>
</dbReference>
<dbReference type="Gene3D" id="2.40.50.140">
    <property type="entry name" value="Nucleic acid-binding proteins"/>
    <property type="match status" value="1"/>
</dbReference>
<dbReference type="Gene3D" id="3.40.50.150">
    <property type="entry name" value="Vaccinia Virus protein VP39"/>
    <property type="match status" value="1"/>
</dbReference>
<dbReference type="InterPro" id="IPR030390">
    <property type="entry name" value="MeTrfase_TrmA_AS"/>
</dbReference>
<dbReference type="InterPro" id="IPR030391">
    <property type="entry name" value="MeTrfase_TrmA_CS"/>
</dbReference>
<dbReference type="InterPro" id="IPR012340">
    <property type="entry name" value="NA-bd_OB-fold"/>
</dbReference>
<dbReference type="InterPro" id="IPR029063">
    <property type="entry name" value="SAM-dependent_MTases_sf"/>
</dbReference>
<dbReference type="InterPro" id="IPR002792">
    <property type="entry name" value="TRAM_dom"/>
</dbReference>
<dbReference type="InterPro" id="IPR010280">
    <property type="entry name" value="U5_MeTrfase_fam"/>
</dbReference>
<dbReference type="NCBIfam" id="TIGR00479">
    <property type="entry name" value="rumA"/>
    <property type="match status" value="1"/>
</dbReference>
<dbReference type="PANTHER" id="PTHR11061:SF45">
    <property type="match status" value="1"/>
</dbReference>
<dbReference type="PANTHER" id="PTHR11061">
    <property type="entry name" value="RNA M5U METHYLTRANSFERASE"/>
    <property type="match status" value="1"/>
</dbReference>
<dbReference type="Pfam" id="PF01938">
    <property type="entry name" value="TRAM"/>
    <property type="match status" value="1"/>
</dbReference>
<dbReference type="Pfam" id="PF05958">
    <property type="entry name" value="tRNA_U5-meth_tr"/>
    <property type="match status" value="1"/>
</dbReference>
<dbReference type="SUPFAM" id="SSF50249">
    <property type="entry name" value="Nucleic acid-binding proteins"/>
    <property type="match status" value="1"/>
</dbReference>
<dbReference type="SUPFAM" id="SSF53335">
    <property type="entry name" value="S-adenosyl-L-methionine-dependent methyltransferases"/>
    <property type="match status" value="1"/>
</dbReference>
<dbReference type="PROSITE" id="PS51687">
    <property type="entry name" value="SAM_MT_RNA_M5U"/>
    <property type="match status" value="1"/>
</dbReference>
<dbReference type="PROSITE" id="PS50926">
    <property type="entry name" value="TRAM"/>
    <property type="match status" value="1"/>
</dbReference>
<dbReference type="PROSITE" id="PS01230">
    <property type="entry name" value="TRMA_1"/>
    <property type="match status" value="1"/>
</dbReference>
<dbReference type="PROSITE" id="PS01231">
    <property type="entry name" value="TRMA_2"/>
    <property type="match status" value="1"/>
</dbReference>
<name>Y1779_STRMU</name>
<reference key="1">
    <citation type="journal article" date="2002" name="Proc. Natl. Acad. Sci. U.S.A.">
        <title>Genome sequence of Streptococcus mutans UA159, a cariogenic dental pathogen.</title>
        <authorList>
            <person name="Ajdic D.J."/>
            <person name="McShan W.M."/>
            <person name="McLaughlin R.E."/>
            <person name="Savic G."/>
            <person name="Chang J."/>
            <person name="Carson M.B."/>
            <person name="Primeaux C."/>
            <person name="Tian R."/>
            <person name="Kenton S."/>
            <person name="Jia H.G."/>
            <person name="Lin S.P."/>
            <person name="Qian Y."/>
            <person name="Li S."/>
            <person name="Zhu H."/>
            <person name="Najar F.Z."/>
            <person name="Lai H."/>
            <person name="White J."/>
            <person name="Roe B.A."/>
            <person name="Ferretti J.J."/>
        </authorList>
    </citation>
    <scope>NUCLEOTIDE SEQUENCE [LARGE SCALE GENOMIC DNA]</scope>
    <source>
        <strain>ATCC 700610 / UA159</strain>
    </source>
</reference>
<comment type="similarity">
    <text evidence="3">Belongs to the class I-like SAM-binding methyltransferase superfamily. RNA M5U methyltransferase family.</text>
</comment>
<gene>
    <name type="ordered locus">SMU_1779c</name>
</gene>
<organism>
    <name type="scientific">Streptococcus mutans serotype c (strain ATCC 700610 / UA159)</name>
    <dbReference type="NCBI Taxonomy" id="210007"/>
    <lineage>
        <taxon>Bacteria</taxon>
        <taxon>Bacillati</taxon>
        <taxon>Bacillota</taxon>
        <taxon>Bacilli</taxon>
        <taxon>Lactobacillales</taxon>
        <taxon>Streptococcaceae</taxon>
        <taxon>Streptococcus</taxon>
    </lineage>
</organism>
<keyword id="KW-0004">4Fe-4S</keyword>
<keyword id="KW-0408">Iron</keyword>
<keyword id="KW-0411">Iron-sulfur</keyword>
<keyword id="KW-0479">Metal-binding</keyword>
<keyword id="KW-0489">Methyltransferase</keyword>
<keyword id="KW-1185">Reference proteome</keyword>
<keyword id="KW-0949">S-adenosyl-L-methionine</keyword>
<keyword id="KW-0808">Transferase</keyword>
<proteinExistence type="inferred from homology"/>
<feature type="chain" id="PRO_0000162030" description="Uncharacterized RNA methyltransferase SMU_1779c">
    <location>
        <begin position="1"/>
        <end position="459"/>
    </location>
</feature>
<feature type="domain" description="TRAM" evidence="2">
    <location>
        <begin position="2"/>
        <end position="60"/>
    </location>
</feature>
<feature type="active site" description="Nucleophile" evidence="3">
    <location>
        <position position="409"/>
    </location>
</feature>
<feature type="binding site" evidence="1">
    <location>
        <position position="73"/>
    </location>
    <ligand>
        <name>[4Fe-4S] cluster</name>
        <dbReference type="ChEBI" id="CHEBI:49883"/>
    </ligand>
</feature>
<feature type="binding site" evidence="1">
    <location>
        <position position="79"/>
    </location>
    <ligand>
        <name>[4Fe-4S] cluster</name>
        <dbReference type="ChEBI" id="CHEBI:49883"/>
    </ligand>
</feature>
<feature type="binding site" evidence="1">
    <location>
        <position position="82"/>
    </location>
    <ligand>
        <name>[4Fe-4S] cluster</name>
        <dbReference type="ChEBI" id="CHEBI:49883"/>
    </ligand>
</feature>
<feature type="binding site" evidence="1">
    <location>
        <position position="162"/>
    </location>
    <ligand>
        <name>[4Fe-4S] cluster</name>
        <dbReference type="ChEBI" id="CHEBI:49883"/>
    </ligand>
</feature>
<feature type="binding site" evidence="3">
    <location>
        <position position="284"/>
    </location>
    <ligand>
        <name>S-adenosyl-L-methionine</name>
        <dbReference type="ChEBI" id="CHEBI:59789"/>
    </ligand>
</feature>
<feature type="binding site" evidence="3">
    <location>
        <position position="313"/>
    </location>
    <ligand>
        <name>S-adenosyl-L-methionine</name>
        <dbReference type="ChEBI" id="CHEBI:59789"/>
    </ligand>
</feature>
<feature type="binding site" evidence="3">
    <location>
        <position position="334"/>
    </location>
    <ligand>
        <name>S-adenosyl-L-methionine</name>
        <dbReference type="ChEBI" id="CHEBI:59789"/>
    </ligand>
</feature>
<feature type="binding site" evidence="3">
    <location>
        <position position="382"/>
    </location>
    <ligand>
        <name>S-adenosyl-L-methionine</name>
        <dbReference type="ChEBI" id="CHEBI:59789"/>
    </ligand>
</feature>
<accession>Q8DSK3</accession>
<evidence type="ECO:0000250" key="1"/>
<evidence type="ECO:0000255" key="2">
    <source>
        <dbReference type="PROSITE-ProRule" id="PRU00208"/>
    </source>
</evidence>
<evidence type="ECO:0000255" key="3">
    <source>
        <dbReference type="PROSITE-ProRule" id="PRU01024"/>
    </source>
</evidence>